<gene>
    <name type="primary">MC1R</name>
</gene>
<feature type="chain" id="PRO_0000069827" description="Melanocyte-stimulating hormone receptor">
    <location>
        <begin position="1"/>
        <end position="317"/>
    </location>
</feature>
<feature type="topological domain" description="Extracellular" evidence="2">
    <location>
        <begin position="1"/>
        <end position="37"/>
    </location>
</feature>
<feature type="transmembrane region" description="Helical; Name=1" evidence="2">
    <location>
        <begin position="38"/>
        <end position="63"/>
    </location>
</feature>
<feature type="topological domain" description="Cytoplasmic" evidence="2">
    <location>
        <begin position="64"/>
        <end position="72"/>
    </location>
</feature>
<feature type="transmembrane region" description="Helical; Name=2" evidence="2">
    <location>
        <begin position="73"/>
        <end position="93"/>
    </location>
</feature>
<feature type="topological domain" description="Extracellular" evidence="2">
    <location>
        <begin position="94"/>
        <end position="118"/>
    </location>
</feature>
<feature type="transmembrane region" description="Helical; Name=3" evidence="2">
    <location>
        <begin position="119"/>
        <end position="140"/>
    </location>
</feature>
<feature type="topological domain" description="Cytoplasmic" evidence="2">
    <location>
        <begin position="141"/>
        <end position="163"/>
    </location>
</feature>
<feature type="transmembrane region" description="Helical; Name=4" evidence="2">
    <location>
        <begin position="164"/>
        <end position="183"/>
    </location>
</feature>
<feature type="topological domain" description="Extracellular" evidence="2">
    <location>
        <begin position="184"/>
        <end position="191"/>
    </location>
</feature>
<feature type="transmembrane region" description="Helical; Name=5" evidence="2">
    <location>
        <begin position="192"/>
        <end position="211"/>
    </location>
</feature>
<feature type="topological domain" description="Cytoplasmic" evidence="2">
    <location>
        <begin position="212"/>
        <end position="240"/>
    </location>
</feature>
<feature type="transmembrane region" description="Helical; Name=6" evidence="2">
    <location>
        <begin position="241"/>
        <end position="266"/>
    </location>
</feature>
<feature type="topological domain" description="Extracellular" evidence="2">
    <location>
        <begin position="267"/>
        <end position="279"/>
    </location>
</feature>
<feature type="transmembrane region" description="Helical; Name=7" evidence="2">
    <location>
        <begin position="280"/>
        <end position="300"/>
    </location>
</feature>
<feature type="topological domain" description="Cytoplasmic" evidence="2">
    <location>
        <begin position="301"/>
        <end position="317"/>
    </location>
</feature>
<feature type="lipid moiety-binding region" description="S-palmitoyl cysteine" evidence="2">
    <location>
        <position position="315"/>
    </location>
</feature>
<feature type="glycosylation site" description="N-linked (GlcNAc...) asparagine" evidence="2">
    <location>
        <position position="29"/>
    </location>
</feature>
<dbReference type="EMBL" id="AY205103">
    <property type="protein sequence ID" value="AAP30977.1"/>
    <property type="molecule type" value="Genomic_DNA"/>
</dbReference>
<dbReference type="EMBL" id="AB296173">
    <property type="protein sequence ID" value="BAF48405.1"/>
    <property type="molecule type" value="Genomic_DNA"/>
</dbReference>
<dbReference type="SMR" id="Q864J4"/>
<dbReference type="FunCoup" id="Q864J4">
    <property type="interactions" value="898"/>
</dbReference>
<dbReference type="STRING" id="9544.ENSMMUP00000032257"/>
<dbReference type="GlyCosmos" id="Q864J4">
    <property type="glycosylation" value="1 site, No reported glycans"/>
</dbReference>
<dbReference type="PaxDb" id="9544-ENSMMUP00000032257"/>
<dbReference type="eggNOG" id="KOG3656">
    <property type="taxonomic scope" value="Eukaryota"/>
</dbReference>
<dbReference type="HOGENOM" id="CLU_009579_13_0_1"/>
<dbReference type="InParanoid" id="Q864J4"/>
<dbReference type="TreeFam" id="TF332646"/>
<dbReference type="Proteomes" id="UP000006718">
    <property type="component" value="Unassembled WGS sequence"/>
</dbReference>
<dbReference type="GO" id="GO:0005737">
    <property type="term" value="C:cytoplasm"/>
    <property type="evidence" value="ECO:0000318"/>
    <property type="project" value="GO_Central"/>
</dbReference>
<dbReference type="GO" id="GO:0005886">
    <property type="term" value="C:plasma membrane"/>
    <property type="evidence" value="ECO:0000250"/>
    <property type="project" value="UniProtKB"/>
</dbReference>
<dbReference type="GO" id="GO:0004980">
    <property type="term" value="F:melanocyte-stimulating hormone receptor activity"/>
    <property type="evidence" value="ECO:0000318"/>
    <property type="project" value="GO_Central"/>
</dbReference>
<dbReference type="GO" id="GO:0007189">
    <property type="term" value="P:adenylate cyclase-activating G protein-coupled receptor signaling pathway"/>
    <property type="evidence" value="ECO:0000318"/>
    <property type="project" value="GO_Central"/>
</dbReference>
<dbReference type="GO" id="GO:0019222">
    <property type="term" value="P:regulation of metabolic process"/>
    <property type="evidence" value="ECO:0000318"/>
    <property type="project" value="GO_Central"/>
</dbReference>
<dbReference type="CDD" id="cd15351">
    <property type="entry name" value="7tmA_MC1R"/>
    <property type="match status" value="1"/>
</dbReference>
<dbReference type="FunFam" id="1.20.1070.10:FF:000211">
    <property type="entry name" value="Melanocyte-stimulating hormone receptor"/>
    <property type="match status" value="1"/>
</dbReference>
<dbReference type="Gene3D" id="1.20.1070.10">
    <property type="entry name" value="Rhodopsin 7-helix transmembrane proteins"/>
    <property type="match status" value="1"/>
</dbReference>
<dbReference type="InterPro" id="IPR000276">
    <property type="entry name" value="GPCR_Rhodpsn"/>
</dbReference>
<dbReference type="InterPro" id="IPR017452">
    <property type="entry name" value="GPCR_Rhodpsn_7TM"/>
</dbReference>
<dbReference type="InterPro" id="IPR001671">
    <property type="entry name" value="Melcrt_ACTH_rcpt"/>
</dbReference>
<dbReference type="InterPro" id="IPR000761">
    <property type="entry name" value="MSH_rcpt"/>
</dbReference>
<dbReference type="PANTHER" id="PTHR22750">
    <property type="entry name" value="G-PROTEIN COUPLED RECEPTOR"/>
    <property type="match status" value="1"/>
</dbReference>
<dbReference type="Pfam" id="PF00001">
    <property type="entry name" value="7tm_1"/>
    <property type="match status" value="1"/>
</dbReference>
<dbReference type="PRINTS" id="PR00237">
    <property type="entry name" value="GPCRRHODOPSN"/>
</dbReference>
<dbReference type="PRINTS" id="PR00534">
    <property type="entry name" value="MCRFAMILY"/>
</dbReference>
<dbReference type="PRINTS" id="PR00536">
    <property type="entry name" value="MELNOCYTESHR"/>
</dbReference>
<dbReference type="SMART" id="SM01381">
    <property type="entry name" value="7TM_GPCR_Srsx"/>
    <property type="match status" value="1"/>
</dbReference>
<dbReference type="SUPFAM" id="SSF81321">
    <property type="entry name" value="Family A G protein-coupled receptor-like"/>
    <property type="match status" value="1"/>
</dbReference>
<dbReference type="PROSITE" id="PS00237">
    <property type="entry name" value="G_PROTEIN_RECEP_F1_1"/>
    <property type="match status" value="1"/>
</dbReference>
<dbReference type="PROSITE" id="PS50262">
    <property type="entry name" value="G_PROTEIN_RECEP_F1_2"/>
    <property type="match status" value="1"/>
</dbReference>
<comment type="function">
    <text evidence="1">Receptor for MSH (alpha, beta and gamma) and ACTH. The activity of this receptor is mediated by G proteins which activate adenylate cyclase. Mediates melanogenesis, the production of eumelanin (black/brown) and phaeomelanin (red/yellow), via regulation of cAMP signaling in melanocytes.</text>
</comment>
<comment type="subunit">
    <text evidence="1">Interacts with MGRN1, but does not undergo MGRN1-mediated ubiquitination; this interaction competes with GNAS-binding and thus inhibits agonist-induced cAMP production. Interacts with OPN3; the interaction results in a decrease in MC1R-mediated cAMP signaling and ultimately a decrease in melanin production in melanocytes.</text>
</comment>
<comment type="subcellular location">
    <subcellularLocation>
        <location evidence="1">Cell membrane</location>
        <topology evidence="2">Multi-pass membrane protein</topology>
    </subcellularLocation>
</comment>
<comment type="tissue specificity">
    <text evidence="4">Expressed in the adrenal gland.</text>
</comment>
<comment type="similarity">
    <text evidence="3">Belongs to the G-protein coupled receptor 1 family.</text>
</comment>
<protein>
    <recommendedName>
        <fullName>Melanocyte-stimulating hormone receptor</fullName>
        <shortName>MSH-R</shortName>
    </recommendedName>
    <alternativeName>
        <fullName>Melanocortin receptor 1</fullName>
        <shortName>MC1-R</shortName>
    </alternativeName>
</protein>
<proteinExistence type="evidence at transcript level"/>
<reference key="1">
    <citation type="journal article" date="2003" name="Am. J. Phys. Anthropol.">
        <title>Evolution of a pigmentation gene, the melanocortin-1 receptor, in primates.</title>
        <authorList>
            <person name="Mundy N.I."/>
            <person name="Kelly J."/>
        </authorList>
    </citation>
    <scope>NUCLEOTIDE SEQUENCE [GENOMIC DNA]</scope>
    <source>
        <strain>Isolate 1</strain>
    </source>
</reference>
<reference key="2">
    <citation type="journal article" date="2008" name="Am. J. Primatol.">
        <title>Variation of the melanocortin 1 receptor gene in the macaques.</title>
        <authorList>
            <person name="Nakayama K."/>
            <person name="Shotake T."/>
            <person name="Takeneka O."/>
            <person name="Ishida T."/>
        </authorList>
    </citation>
    <scope>NUCLEOTIDE SEQUENCE [GENOMIC DNA]</scope>
</reference>
<reference key="3">
    <citation type="journal article" date="1992" name="Science">
        <title>The cloning of a family of genes that encode the melanocortin receptors.</title>
        <authorList>
            <person name="Mountjoy K.G."/>
            <person name="Robbins L.S."/>
            <person name="Mortrud M."/>
            <person name="Cone R.D."/>
        </authorList>
    </citation>
    <scope>TISSUE SPECIFICITY</scope>
    <source>
        <tissue>Skin</tissue>
    </source>
</reference>
<keyword id="KW-1003">Cell membrane</keyword>
<keyword id="KW-0297">G-protein coupled receptor</keyword>
<keyword id="KW-0325">Glycoprotein</keyword>
<keyword id="KW-0449">Lipoprotein</keyword>
<keyword id="KW-0472">Membrane</keyword>
<keyword id="KW-0564">Palmitate</keyword>
<keyword id="KW-0675">Receptor</keyword>
<keyword id="KW-1185">Reference proteome</keyword>
<keyword id="KW-0807">Transducer</keyword>
<keyword id="KW-0812">Transmembrane</keyword>
<keyword id="KW-1133">Transmembrane helix</keyword>
<evidence type="ECO:0000250" key="1">
    <source>
        <dbReference type="UniProtKB" id="Q01726"/>
    </source>
</evidence>
<evidence type="ECO:0000255" key="2"/>
<evidence type="ECO:0000255" key="3">
    <source>
        <dbReference type="PROSITE-ProRule" id="PRU00521"/>
    </source>
</evidence>
<evidence type="ECO:0000269" key="4">
    <source>
    </source>
</evidence>
<sequence>MPVQGSQRRLLGSLNSTPTATPHLGLAANQTGARCREVSIPDGLFLSLGLVSLVENVLVVTAIAKNRNLHSPMYCFICCLALSDLLVSGSNMLETAVTLLLEAGALVARAAVVQQLDNVIDVITCSSMLSSLCFLGAIAVDRYISIFYALRYHSIVTLPRAQRAIAAIWVASVLCSTLFIAYYDHAAVLLCLVVFFLAMLVLMAVLYVHMLARACQHAQGIARLHKRQRLAHQGFGLKGAATLTILLGIFFLCWGPFFLHLTLIVLCPQHPTCSCIFKNFNLFLALIICNAIIDPLIYAFRSQELRRTLKEVLLCSW</sequence>
<accession>Q864J4</accession>
<accession>A3KF42</accession>
<organism>
    <name type="scientific">Macaca mulatta</name>
    <name type="common">Rhesus macaque</name>
    <dbReference type="NCBI Taxonomy" id="9544"/>
    <lineage>
        <taxon>Eukaryota</taxon>
        <taxon>Metazoa</taxon>
        <taxon>Chordata</taxon>
        <taxon>Craniata</taxon>
        <taxon>Vertebrata</taxon>
        <taxon>Euteleostomi</taxon>
        <taxon>Mammalia</taxon>
        <taxon>Eutheria</taxon>
        <taxon>Euarchontoglires</taxon>
        <taxon>Primates</taxon>
        <taxon>Haplorrhini</taxon>
        <taxon>Catarrhini</taxon>
        <taxon>Cercopithecidae</taxon>
        <taxon>Cercopithecinae</taxon>
        <taxon>Macaca</taxon>
    </lineage>
</organism>
<name>MSHR_MACMU</name>